<organism>
    <name type="scientific">Kluyveromyces lactis (strain ATCC 8585 / CBS 2359 / DSM 70799 / NBRC 1267 / NRRL Y-1140 / WM37)</name>
    <name type="common">Yeast</name>
    <name type="synonym">Candida sphaerica</name>
    <dbReference type="NCBI Taxonomy" id="284590"/>
    <lineage>
        <taxon>Eukaryota</taxon>
        <taxon>Fungi</taxon>
        <taxon>Dikarya</taxon>
        <taxon>Ascomycota</taxon>
        <taxon>Saccharomycotina</taxon>
        <taxon>Saccharomycetes</taxon>
        <taxon>Saccharomycetales</taxon>
        <taxon>Saccharomycetaceae</taxon>
        <taxon>Kluyveromyces</taxon>
    </lineage>
</organism>
<keyword id="KW-0002">3D-structure</keyword>
<keyword id="KW-0131">Cell cycle</keyword>
<keyword id="KW-0132">Cell division</keyword>
<keyword id="KW-0137">Centromere</keyword>
<keyword id="KW-0158">Chromosome</keyword>
<keyword id="KW-0175">Coiled coil</keyword>
<keyword id="KW-0995">Kinetochore</keyword>
<keyword id="KW-0469">Meiosis</keyword>
<keyword id="KW-0498">Mitosis</keyword>
<keyword id="KW-0539">Nucleus</keyword>
<keyword id="KW-1185">Reference proteome</keyword>
<protein>
    <recommendedName>
        <fullName>Inner kinetochore subunit OKP1</fullName>
    </recommendedName>
    <alternativeName>
        <fullName>CENP-Q homolog</fullName>
    </alternativeName>
    <alternativeName>
        <fullName>Constitutive centromere-associated network protein OKP1</fullName>
    </alternativeName>
</protein>
<gene>
    <name type="primary">OKP1</name>
    <name type="ordered locus">KLLA0F15136g</name>
</gene>
<reference key="1">
    <citation type="journal article" date="2004" name="Nature">
        <title>Genome evolution in yeasts.</title>
        <authorList>
            <person name="Dujon B."/>
            <person name="Sherman D."/>
            <person name="Fischer G."/>
            <person name="Durrens P."/>
            <person name="Casaregola S."/>
            <person name="Lafontaine I."/>
            <person name="de Montigny J."/>
            <person name="Marck C."/>
            <person name="Neuveglise C."/>
            <person name="Talla E."/>
            <person name="Goffard N."/>
            <person name="Frangeul L."/>
            <person name="Aigle M."/>
            <person name="Anthouard V."/>
            <person name="Babour A."/>
            <person name="Barbe V."/>
            <person name="Barnay S."/>
            <person name="Blanchin S."/>
            <person name="Beckerich J.-M."/>
            <person name="Beyne E."/>
            <person name="Bleykasten C."/>
            <person name="Boisrame A."/>
            <person name="Boyer J."/>
            <person name="Cattolico L."/>
            <person name="Confanioleri F."/>
            <person name="de Daruvar A."/>
            <person name="Despons L."/>
            <person name="Fabre E."/>
            <person name="Fairhead C."/>
            <person name="Ferry-Dumazet H."/>
            <person name="Groppi A."/>
            <person name="Hantraye F."/>
            <person name="Hennequin C."/>
            <person name="Jauniaux N."/>
            <person name="Joyet P."/>
            <person name="Kachouri R."/>
            <person name="Kerrest A."/>
            <person name="Koszul R."/>
            <person name="Lemaire M."/>
            <person name="Lesur I."/>
            <person name="Ma L."/>
            <person name="Muller H."/>
            <person name="Nicaud J.-M."/>
            <person name="Nikolski M."/>
            <person name="Oztas S."/>
            <person name="Ozier-Kalogeropoulos O."/>
            <person name="Pellenz S."/>
            <person name="Potier S."/>
            <person name="Richard G.-F."/>
            <person name="Straub M.-L."/>
            <person name="Suleau A."/>
            <person name="Swennen D."/>
            <person name="Tekaia F."/>
            <person name="Wesolowski-Louvel M."/>
            <person name="Westhof E."/>
            <person name="Wirth B."/>
            <person name="Zeniou-Meyer M."/>
            <person name="Zivanovic Y."/>
            <person name="Bolotin-Fukuhara M."/>
            <person name="Thierry A."/>
            <person name="Bouchier C."/>
            <person name="Caudron B."/>
            <person name="Scarpelli C."/>
            <person name="Gaillardin C."/>
            <person name="Weissenbach J."/>
            <person name="Wincker P."/>
            <person name="Souciet J.-L."/>
        </authorList>
    </citation>
    <scope>NUCLEOTIDE SEQUENCE [LARGE SCALE GENOMIC DNA]</scope>
    <source>
        <strain>ATCC 8585 / CBS 2359 / DSM 70799 / NBRC 1267 / NRRL Y-1140 / WM37</strain>
    </source>
</reference>
<reference key="2">
    <citation type="journal article" date="2017" name="EMBO J.">
        <title>Molecular basis for inner kinetochore configuration through RWD domain-peptide interactions.</title>
        <authorList>
            <person name="Schmitzberger F."/>
            <person name="Richter M.M."/>
            <person name="Gordiyenko Y."/>
            <person name="Robinson C.V."/>
            <person name="Dadlez M."/>
            <person name="Westermann S."/>
        </authorList>
    </citation>
    <scope>X-RAY CRYSTALLOGRAPHY (2.10 ANGSTROMS) OF 295-360 IN COMPLEX WITH CTF19 AND MCM21</scope>
    <scope>INTERACTION WITH AME1; NKP1 AND NKP2</scope>
    <scope>SUBUNIT</scope>
    <scope>SUBCELLULAR LOCATION</scope>
    <scope>FUNCTION</scope>
</reference>
<dbReference type="EMBL" id="CR382126">
    <property type="protein sequence ID" value="CAG98467.1"/>
    <property type="molecule type" value="Genomic_DNA"/>
</dbReference>
<dbReference type="RefSeq" id="XP_455759.1">
    <property type="nucleotide sequence ID" value="XM_455759.1"/>
</dbReference>
<dbReference type="PDB" id="5MU3">
    <property type="method" value="X-ray"/>
    <property type="resolution" value="2.10 A"/>
    <property type="chains" value="C/F=295-360"/>
</dbReference>
<dbReference type="PDBsum" id="5MU3"/>
<dbReference type="SMR" id="Q6CJY0"/>
<dbReference type="FunCoup" id="Q6CJY0">
    <property type="interactions" value="82"/>
</dbReference>
<dbReference type="IntAct" id="Q6CJY0">
    <property type="interactions" value="1"/>
</dbReference>
<dbReference type="MINT" id="Q6CJY0"/>
<dbReference type="STRING" id="284590.Q6CJY0"/>
<dbReference type="PaxDb" id="284590-Q6CJY0"/>
<dbReference type="KEGG" id="kla:KLLA0_F15136g"/>
<dbReference type="eggNOG" id="ENOG502S031">
    <property type="taxonomic scope" value="Eukaryota"/>
</dbReference>
<dbReference type="HOGENOM" id="CLU_058662_0_0_1"/>
<dbReference type="InParanoid" id="Q6CJY0"/>
<dbReference type="OMA" id="HEPPYNL"/>
<dbReference type="Proteomes" id="UP000000598">
    <property type="component" value="Chromosome F"/>
</dbReference>
<dbReference type="GO" id="GO:0000776">
    <property type="term" value="C:kinetochore"/>
    <property type="evidence" value="ECO:0007669"/>
    <property type="project" value="UniProtKB-KW"/>
</dbReference>
<dbReference type="GO" id="GO:0005634">
    <property type="term" value="C:nucleus"/>
    <property type="evidence" value="ECO:0007669"/>
    <property type="project" value="UniProtKB-SubCell"/>
</dbReference>
<dbReference type="GO" id="GO:0051301">
    <property type="term" value="P:cell division"/>
    <property type="evidence" value="ECO:0007669"/>
    <property type="project" value="UniProtKB-KW"/>
</dbReference>
<dbReference type="GO" id="GO:0051321">
    <property type="term" value="P:meiotic cell cycle"/>
    <property type="evidence" value="ECO:0007669"/>
    <property type="project" value="UniProtKB-KW"/>
</dbReference>
<proteinExistence type="evidence at protein level"/>
<accession>Q6CJY0</accession>
<evidence type="ECO:0000250" key="1">
    <source>
        <dbReference type="UniProtKB" id="P53298"/>
    </source>
</evidence>
<evidence type="ECO:0000255" key="2"/>
<evidence type="ECO:0000256" key="3">
    <source>
        <dbReference type="SAM" id="MobiDB-lite"/>
    </source>
</evidence>
<evidence type="ECO:0000269" key="4">
    <source>
    </source>
</evidence>
<evidence type="ECO:0000305" key="5"/>
<evidence type="ECO:0007829" key="6">
    <source>
        <dbReference type="PDB" id="5MU3"/>
    </source>
</evidence>
<sequence length="383" mass="44886">MSKRYLDDVLSPDTGTSDSDSSIENLNADNYRIDIVNDNARRDDIDRIQSSNLNHEPPYNLEGVFAIDDDEHGDEMVRKDSDRRQDITEDNDDSFVPDITTPPRERKRVRFGINEKGGDEEFNNVSPWDFKRLIRKFYKEQLPDTYQIRNWKRPSKDMLTNFIDLIENNIELASEEVFKQYHQELNQLYPDSEEQAKLKDSLENKVFDTTYNIKKRLKRTKVPSKIWVDNLNMEYIYAKGESIKKRYKSELDRAEAIERQLIREEEHLKSLQEKGETQAKKRKQVLSKELSELSKTMHPSLSVALSNTFGLIKDDKMSNEIYQQDKIDFNLKLKTDFSKPLISEKEENSLNGLTNAMDNNRELVNEIFGKISALLQPKKNSNE</sequence>
<comment type="function">
    <text evidence="1 4">Component of the kinetochore, a multiprotein complex that assembles on centromeric DNA and attaches chromosomes to spindle microtubules, mediating chromosome segregation and sister chromatid segregation during meiosis and mitosis (By similarity). Component of the inner kinetochore COMA subcomplex, which connects centromere-associated proteins and the outer kinetochore (PubMed:29046335). COMA interacts with other inner kinetochore proteins to form the inner kinetochore constitutive centromere-associated network (CCAN), which serves as a structural platform for outer kinetochore assembly (By similarity). Through its multiple protein-protein interactions, OKP1 acts as a molecular nexus for inner kinetochore organization (PubMed:29046335).</text>
</comment>
<comment type="subunit">
    <text evidence="1 4">Component of the heterotetrameric kinetochore subcomplex COMA, which consists of AME1, CTF19, MCM21 and OKP1 (PubMed:29046335). The COMA subcomplex is part of a larger constitutive centromere-associated network (CCAN) (also known as central kinetochore CTF19 complex in yeast) (By similarity). COMA binds the centromeric nucleosome-binding protein MIF2, and to the outer kinetochore MIND subcomplex. OKP1 interacts directly with AME1, with an NKP1-NKP2 dimer, and with CTF19-MCM21 (PubMed:29046335).</text>
</comment>
<comment type="subcellular location">
    <subcellularLocation>
        <location evidence="1">Nucleus</location>
    </subcellularLocation>
    <subcellularLocation>
        <location evidence="4">Chromosome</location>
        <location evidence="4">Centromere</location>
        <location evidence="4">Kinetochore</location>
    </subcellularLocation>
</comment>
<comment type="similarity">
    <text evidence="5">Belongs to the CENP-Q/OKP1 family.</text>
</comment>
<feature type="chain" id="PRO_0000443076" description="Inner kinetochore subunit OKP1">
    <location>
        <begin position="1"/>
        <end position="383"/>
    </location>
</feature>
<feature type="region of interest" description="Disordered" evidence="3">
    <location>
        <begin position="1"/>
        <end position="24"/>
    </location>
</feature>
<feature type="region of interest" description="Disordered" evidence="3">
    <location>
        <begin position="77"/>
        <end position="102"/>
    </location>
</feature>
<feature type="region of interest" description="Interaction with AME1" evidence="4">
    <location>
        <begin position="234"/>
        <end position="264"/>
    </location>
</feature>
<feature type="region of interest" description="CTF19-MCM21 binding motif" evidence="4">
    <location>
        <begin position="318"/>
        <end position="337"/>
    </location>
</feature>
<feature type="region of interest" description="Interaction with NKP1-NKP2" evidence="4">
    <location>
        <begin position="350"/>
        <end position="383"/>
    </location>
</feature>
<feature type="coiled-coil region" evidence="2">
    <location>
        <begin position="244"/>
        <end position="274"/>
    </location>
</feature>
<feature type="compositionally biased region" description="Low complexity" evidence="3">
    <location>
        <begin position="11"/>
        <end position="22"/>
    </location>
</feature>
<feature type="compositionally biased region" description="Basic and acidic residues" evidence="3">
    <location>
        <begin position="77"/>
        <end position="87"/>
    </location>
</feature>
<feature type="helix" evidence="6">
    <location>
        <begin position="320"/>
        <end position="329"/>
    </location>
</feature>
<name>CENPQ_KLULA</name>